<dbReference type="EC" id="1.1.1.94" evidence="1"/>
<dbReference type="EMBL" id="AM884176">
    <property type="protein sequence ID" value="CAP03527.1"/>
    <property type="molecule type" value="Genomic_DNA"/>
</dbReference>
<dbReference type="RefSeq" id="WP_009873317.1">
    <property type="nucleotide sequence ID" value="NC_010287.1"/>
</dbReference>
<dbReference type="RefSeq" id="YP_001654174.1">
    <property type="nucleotide sequence ID" value="NC_010287.1"/>
</dbReference>
<dbReference type="SMR" id="B0B8U0"/>
<dbReference type="KEGG" id="ctb:CTL0083"/>
<dbReference type="PATRIC" id="fig|471472.4.peg.90"/>
<dbReference type="HOGENOM" id="CLU_033449_0_2_0"/>
<dbReference type="UniPathway" id="UPA00940"/>
<dbReference type="Proteomes" id="UP001154402">
    <property type="component" value="Chromosome"/>
</dbReference>
<dbReference type="GO" id="GO:0005829">
    <property type="term" value="C:cytosol"/>
    <property type="evidence" value="ECO:0007669"/>
    <property type="project" value="TreeGrafter"/>
</dbReference>
<dbReference type="GO" id="GO:0047952">
    <property type="term" value="F:glycerol-3-phosphate dehydrogenase [NAD(P)+] activity"/>
    <property type="evidence" value="ECO:0007669"/>
    <property type="project" value="UniProtKB-UniRule"/>
</dbReference>
<dbReference type="GO" id="GO:0051287">
    <property type="term" value="F:NAD binding"/>
    <property type="evidence" value="ECO:0007669"/>
    <property type="project" value="InterPro"/>
</dbReference>
<dbReference type="GO" id="GO:0005975">
    <property type="term" value="P:carbohydrate metabolic process"/>
    <property type="evidence" value="ECO:0007669"/>
    <property type="project" value="InterPro"/>
</dbReference>
<dbReference type="GO" id="GO:0046167">
    <property type="term" value="P:glycerol-3-phosphate biosynthetic process"/>
    <property type="evidence" value="ECO:0007669"/>
    <property type="project" value="UniProtKB-UniRule"/>
</dbReference>
<dbReference type="GO" id="GO:0046168">
    <property type="term" value="P:glycerol-3-phosphate catabolic process"/>
    <property type="evidence" value="ECO:0007669"/>
    <property type="project" value="InterPro"/>
</dbReference>
<dbReference type="GO" id="GO:0006650">
    <property type="term" value="P:glycerophospholipid metabolic process"/>
    <property type="evidence" value="ECO:0007669"/>
    <property type="project" value="UniProtKB-UniRule"/>
</dbReference>
<dbReference type="GO" id="GO:0008654">
    <property type="term" value="P:phospholipid biosynthetic process"/>
    <property type="evidence" value="ECO:0007669"/>
    <property type="project" value="UniProtKB-KW"/>
</dbReference>
<dbReference type="FunFam" id="1.10.1040.10:FF:000001">
    <property type="entry name" value="Glycerol-3-phosphate dehydrogenase [NAD(P)+]"/>
    <property type="match status" value="1"/>
</dbReference>
<dbReference type="Gene3D" id="1.10.1040.10">
    <property type="entry name" value="N-(1-d-carboxylethyl)-l-norvaline Dehydrogenase, domain 2"/>
    <property type="match status" value="1"/>
</dbReference>
<dbReference type="Gene3D" id="3.40.50.720">
    <property type="entry name" value="NAD(P)-binding Rossmann-like Domain"/>
    <property type="match status" value="1"/>
</dbReference>
<dbReference type="HAMAP" id="MF_00394">
    <property type="entry name" value="NAD_Glyc3P_dehydrog"/>
    <property type="match status" value="1"/>
</dbReference>
<dbReference type="InterPro" id="IPR008927">
    <property type="entry name" value="6-PGluconate_DH-like_C_sf"/>
</dbReference>
<dbReference type="InterPro" id="IPR013328">
    <property type="entry name" value="6PGD_dom2"/>
</dbReference>
<dbReference type="InterPro" id="IPR006168">
    <property type="entry name" value="G3P_DH_NAD-dep"/>
</dbReference>
<dbReference type="InterPro" id="IPR006109">
    <property type="entry name" value="G3P_DH_NAD-dep_C"/>
</dbReference>
<dbReference type="InterPro" id="IPR011128">
    <property type="entry name" value="G3P_DH_NAD-dep_N"/>
</dbReference>
<dbReference type="InterPro" id="IPR036291">
    <property type="entry name" value="NAD(P)-bd_dom_sf"/>
</dbReference>
<dbReference type="NCBIfam" id="NF000940">
    <property type="entry name" value="PRK00094.1-2"/>
    <property type="match status" value="1"/>
</dbReference>
<dbReference type="NCBIfam" id="NF000942">
    <property type="entry name" value="PRK00094.1-4"/>
    <property type="match status" value="1"/>
</dbReference>
<dbReference type="PANTHER" id="PTHR11728">
    <property type="entry name" value="GLYCEROL-3-PHOSPHATE DEHYDROGENASE"/>
    <property type="match status" value="1"/>
</dbReference>
<dbReference type="PANTHER" id="PTHR11728:SF1">
    <property type="entry name" value="GLYCEROL-3-PHOSPHATE DEHYDROGENASE [NAD(+)] 2, CHLOROPLASTIC"/>
    <property type="match status" value="1"/>
</dbReference>
<dbReference type="Pfam" id="PF07479">
    <property type="entry name" value="NAD_Gly3P_dh_C"/>
    <property type="match status" value="1"/>
</dbReference>
<dbReference type="Pfam" id="PF01210">
    <property type="entry name" value="NAD_Gly3P_dh_N"/>
    <property type="match status" value="1"/>
</dbReference>
<dbReference type="PIRSF" id="PIRSF000114">
    <property type="entry name" value="Glycerol-3-P_dh"/>
    <property type="match status" value="1"/>
</dbReference>
<dbReference type="PRINTS" id="PR00077">
    <property type="entry name" value="GPDHDRGNASE"/>
</dbReference>
<dbReference type="SUPFAM" id="SSF48179">
    <property type="entry name" value="6-phosphogluconate dehydrogenase C-terminal domain-like"/>
    <property type="match status" value="1"/>
</dbReference>
<dbReference type="SUPFAM" id="SSF51735">
    <property type="entry name" value="NAD(P)-binding Rossmann-fold domains"/>
    <property type="match status" value="1"/>
</dbReference>
<dbReference type="PROSITE" id="PS00957">
    <property type="entry name" value="NAD_G3PDH"/>
    <property type="match status" value="1"/>
</dbReference>
<name>GPDA_CHLT2</name>
<gene>
    <name evidence="1" type="primary">gpsA</name>
    <name type="ordered locus">CTL0083</name>
</gene>
<protein>
    <recommendedName>
        <fullName evidence="1">Glycerol-3-phosphate dehydrogenase [NAD(P)+]</fullName>
        <ecNumber evidence="1">1.1.1.94</ecNumber>
    </recommendedName>
    <alternativeName>
        <fullName evidence="1">NAD(P)(+)-dependent glycerol-3-phosphate dehydrogenase</fullName>
    </alternativeName>
    <alternativeName>
        <fullName evidence="1">NAD(P)H-dependent dihydroxyacetone-phosphate reductase</fullName>
    </alternativeName>
</protein>
<proteinExistence type="inferred from homology"/>
<comment type="function">
    <text evidence="1">Catalyzes the reduction of the glycolytic intermediate dihydroxyacetone phosphate (DHAP) to sn-glycerol 3-phosphate (G3P), the key precursor for phospholipid synthesis.</text>
</comment>
<comment type="catalytic activity">
    <reaction evidence="1">
        <text>sn-glycerol 3-phosphate + NAD(+) = dihydroxyacetone phosphate + NADH + H(+)</text>
        <dbReference type="Rhea" id="RHEA:11092"/>
        <dbReference type="ChEBI" id="CHEBI:15378"/>
        <dbReference type="ChEBI" id="CHEBI:57540"/>
        <dbReference type="ChEBI" id="CHEBI:57597"/>
        <dbReference type="ChEBI" id="CHEBI:57642"/>
        <dbReference type="ChEBI" id="CHEBI:57945"/>
        <dbReference type="EC" id="1.1.1.94"/>
    </reaction>
    <physiologicalReaction direction="right-to-left" evidence="1">
        <dbReference type="Rhea" id="RHEA:11094"/>
    </physiologicalReaction>
</comment>
<comment type="catalytic activity">
    <reaction evidence="1">
        <text>sn-glycerol 3-phosphate + NADP(+) = dihydroxyacetone phosphate + NADPH + H(+)</text>
        <dbReference type="Rhea" id="RHEA:11096"/>
        <dbReference type="ChEBI" id="CHEBI:15378"/>
        <dbReference type="ChEBI" id="CHEBI:57597"/>
        <dbReference type="ChEBI" id="CHEBI:57642"/>
        <dbReference type="ChEBI" id="CHEBI:57783"/>
        <dbReference type="ChEBI" id="CHEBI:58349"/>
        <dbReference type="EC" id="1.1.1.94"/>
    </reaction>
    <physiologicalReaction direction="right-to-left" evidence="1">
        <dbReference type="Rhea" id="RHEA:11098"/>
    </physiologicalReaction>
</comment>
<comment type="pathway">
    <text evidence="1">Membrane lipid metabolism; glycerophospholipid metabolism.</text>
</comment>
<comment type="subcellular location">
    <subcellularLocation>
        <location evidence="1">Cytoplasm</location>
    </subcellularLocation>
</comment>
<comment type="similarity">
    <text evidence="1">Belongs to the NAD-dependent glycerol-3-phosphate dehydrogenase family.</text>
</comment>
<feature type="chain" id="PRO_1000123131" description="Glycerol-3-phosphate dehydrogenase [NAD(P)+]">
    <location>
        <begin position="1"/>
        <end position="334"/>
    </location>
</feature>
<feature type="active site" description="Proton acceptor" evidence="1">
    <location>
        <position position="192"/>
    </location>
</feature>
<feature type="binding site" evidence="1">
    <location>
        <position position="13"/>
    </location>
    <ligand>
        <name>NADPH</name>
        <dbReference type="ChEBI" id="CHEBI:57783"/>
    </ligand>
</feature>
<feature type="binding site" evidence="1">
    <location>
        <position position="33"/>
    </location>
    <ligand>
        <name>NADPH</name>
        <dbReference type="ChEBI" id="CHEBI:57783"/>
    </ligand>
</feature>
<feature type="binding site" evidence="1">
    <location>
        <position position="106"/>
    </location>
    <ligand>
        <name>NADPH</name>
        <dbReference type="ChEBI" id="CHEBI:57783"/>
    </ligand>
</feature>
<feature type="binding site" evidence="1">
    <location>
        <position position="106"/>
    </location>
    <ligand>
        <name>sn-glycerol 3-phosphate</name>
        <dbReference type="ChEBI" id="CHEBI:57597"/>
    </ligand>
</feature>
<feature type="binding site" evidence="1">
    <location>
        <position position="137"/>
    </location>
    <ligand>
        <name>sn-glycerol 3-phosphate</name>
        <dbReference type="ChEBI" id="CHEBI:57597"/>
    </ligand>
</feature>
<feature type="binding site" evidence="1">
    <location>
        <position position="139"/>
    </location>
    <ligand>
        <name>sn-glycerol 3-phosphate</name>
        <dbReference type="ChEBI" id="CHEBI:57597"/>
    </ligand>
</feature>
<feature type="binding site" evidence="1">
    <location>
        <position position="141"/>
    </location>
    <ligand>
        <name>NADPH</name>
        <dbReference type="ChEBI" id="CHEBI:57783"/>
    </ligand>
</feature>
<feature type="binding site" evidence="1">
    <location>
        <position position="192"/>
    </location>
    <ligand>
        <name>sn-glycerol 3-phosphate</name>
        <dbReference type="ChEBI" id="CHEBI:57597"/>
    </ligand>
</feature>
<feature type="binding site" evidence="1">
    <location>
        <position position="245"/>
    </location>
    <ligand>
        <name>sn-glycerol 3-phosphate</name>
        <dbReference type="ChEBI" id="CHEBI:57597"/>
    </ligand>
</feature>
<feature type="binding site" evidence="1">
    <location>
        <position position="255"/>
    </location>
    <ligand>
        <name>sn-glycerol 3-phosphate</name>
        <dbReference type="ChEBI" id="CHEBI:57597"/>
    </ligand>
</feature>
<feature type="binding site" evidence="1">
    <location>
        <position position="256"/>
    </location>
    <ligand>
        <name>NADPH</name>
        <dbReference type="ChEBI" id="CHEBI:57783"/>
    </ligand>
</feature>
<feature type="binding site" evidence="1">
    <location>
        <position position="256"/>
    </location>
    <ligand>
        <name>sn-glycerol 3-phosphate</name>
        <dbReference type="ChEBI" id="CHEBI:57597"/>
    </ligand>
</feature>
<feature type="binding site" evidence="1">
    <location>
        <position position="257"/>
    </location>
    <ligand>
        <name>sn-glycerol 3-phosphate</name>
        <dbReference type="ChEBI" id="CHEBI:57597"/>
    </ligand>
</feature>
<feature type="binding site" evidence="1">
    <location>
        <position position="280"/>
    </location>
    <ligand>
        <name>NADPH</name>
        <dbReference type="ChEBI" id="CHEBI:57783"/>
    </ligand>
</feature>
<feature type="binding site" evidence="1">
    <location>
        <position position="282"/>
    </location>
    <ligand>
        <name>NADPH</name>
        <dbReference type="ChEBI" id="CHEBI:57783"/>
    </ligand>
</feature>
<organism>
    <name type="scientific">Chlamydia trachomatis serovar L2 (strain ATCC VR-902B / DSM 19102 / 434/Bu)</name>
    <dbReference type="NCBI Taxonomy" id="471472"/>
    <lineage>
        <taxon>Bacteria</taxon>
        <taxon>Pseudomonadati</taxon>
        <taxon>Chlamydiota</taxon>
        <taxon>Chlamydiia</taxon>
        <taxon>Chlamydiales</taxon>
        <taxon>Chlamydiaceae</taxon>
        <taxon>Chlamydia/Chlamydophila group</taxon>
        <taxon>Chlamydia</taxon>
    </lineage>
</organism>
<evidence type="ECO:0000255" key="1">
    <source>
        <dbReference type="HAMAP-Rule" id="MF_00394"/>
    </source>
</evidence>
<reference key="1">
    <citation type="journal article" date="2008" name="Genome Res.">
        <title>Chlamydia trachomatis: genome sequence analysis of lymphogranuloma venereum isolates.</title>
        <authorList>
            <person name="Thomson N.R."/>
            <person name="Holden M.T.G."/>
            <person name="Carder C."/>
            <person name="Lennard N."/>
            <person name="Lockey S.J."/>
            <person name="Marsh P."/>
            <person name="Skipp P."/>
            <person name="O'Connor C.D."/>
            <person name="Goodhead I."/>
            <person name="Norbertzcak H."/>
            <person name="Harris B."/>
            <person name="Ormond D."/>
            <person name="Rance R."/>
            <person name="Quail M.A."/>
            <person name="Parkhill J."/>
            <person name="Stephens R.S."/>
            <person name="Clarke I.N."/>
        </authorList>
    </citation>
    <scope>NUCLEOTIDE SEQUENCE [LARGE SCALE GENOMIC DNA]</scope>
    <source>
        <strain>ATCC VR-902B / DSM 19102 / 434/Bu</strain>
    </source>
</reference>
<accession>B0B8U0</accession>
<sequence>MKETIAYLGMGMWGFSLANLLANNGHRVVGWARNPALIEQLSVQRRHPAAPHISIPQNLSFTYHMEEALDGATMIVEGVTSAGMRPVLTQLKALTELRVPLVITSKGIEQNTGLLLSEIALEIFGRPAAQHLGYLSGPSIASEVLRGCPCSVVISAYNPDTLKQIHRAFLTPTFRVYPNSDLKGVALGGALKNVIAIACGISDGFRFGDNAKSGLVTRGLHEIRKFATIMGCRPDTLNGLAGLGDLCTTCFSAFSRNTLFGKLLAEGLTPEQAKTKIGMVVEGVYTALSAHQIATHHRIDMPITTSVYRVLYENLDIQEGIAQLLQRDTKEEYL</sequence>
<keyword id="KW-0963">Cytoplasm</keyword>
<keyword id="KW-0444">Lipid biosynthesis</keyword>
<keyword id="KW-0443">Lipid metabolism</keyword>
<keyword id="KW-0520">NAD</keyword>
<keyword id="KW-0521">NADP</keyword>
<keyword id="KW-0547">Nucleotide-binding</keyword>
<keyword id="KW-0560">Oxidoreductase</keyword>
<keyword id="KW-0594">Phospholipid biosynthesis</keyword>
<keyword id="KW-1208">Phospholipid metabolism</keyword>